<protein>
    <recommendedName>
        <fullName evidence="1">GTPase Der</fullName>
    </recommendedName>
    <alternativeName>
        <fullName evidence="1">GTP-binding protein EngA</fullName>
    </alternativeName>
</protein>
<feature type="chain" id="PRO_1000071707" description="GTPase Der">
    <location>
        <begin position="1"/>
        <end position="473"/>
    </location>
</feature>
<feature type="domain" description="EngA-type G 1">
    <location>
        <begin position="5"/>
        <end position="170"/>
    </location>
</feature>
<feature type="domain" description="EngA-type G 2">
    <location>
        <begin position="178"/>
        <end position="351"/>
    </location>
</feature>
<feature type="domain" description="KH-like" evidence="1">
    <location>
        <begin position="352"/>
        <end position="436"/>
    </location>
</feature>
<feature type="region of interest" description="Disordered" evidence="2">
    <location>
        <begin position="438"/>
        <end position="473"/>
    </location>
</feature>
<feature type="compositionally biased region" description="Basic residues" evidence="2">
    <location>
        <begin position="459"/>
        <end position="473"/>
    </location>
</feature>
<feature type="binding site" evidence="1">
    <location>
        <begin position="11"/>
        <end position="18"/>
    </location>
    <ligand>
        <name>GTP</name>
        <dbReference type="ChEBI" id="CHEBI:37565"/>
        <label>1</label>
    </ligand>
</feature>
<feature type="binding site" evidence="1">
    <location>
        <begin position="58"/>
        <end position="62"/>
    </location>
    <ligand>
        <name>GTP</name>
        <dbReference type="ChEBI" id="CHEBI:37565"/>
        <label>1</label>
    </ligand>
</feature>
<feature type="binding site" evidence="1">
    <location>
        <begin position="123"/>
        <end position="126"/>
    </location>
    <ligand>
        <name>GTP</name>
        <dbReference type="ChEBI" id="CHEBI:37565"/>
        <label>1</label>
    </ligand>
</feature>
<feature type="binding site" evidence="1">
    <location>
        <begin position="184"/>
        <end position="191"/>
    </location>
    <ligand>
        <name>GTP</name>
        <dbReference type="ChEBI" id="CHEBI:37565"/>
        <label>2</label>
    </ligand>
</feature>
<feature type="binding site" evidence="1">
    <location>
        <begin position="231"/>
        <end position="235"/>
    </location>
    <ligand>
        <name>GTP</name>
        <dbReference type="ChEBI" id="CHEBI:37565"/>
        <label>2</label>
    </ligand>
</feature>
<feature type="binding site" evidence="1">
    <location>
        <begin position="296"/>
        <end position="299"/>
    </location>
    <ligand>
        <name>GTP</name>
        <dbReference type="ChEBI" id="CHEBI:37565"/>
        <label>2</label>
    </ligand>
</feature>
<gene>
    <name evidence="1" type="primary">der</name>
    <name type="synonym">engA</name>
    <name type="ordered locus">PsycPRwf_1759</name>
</gene>
<dbReference type="EMBL" id="CP000713">
    <property type="protein sequence ID" value="ABQ94699.1"/>
    <property type="molecule type" value="Genomic_DNA"/>
</dbReference>
<dbReference type="SMR" id="A5WGA8"/>
<dbReference type="STRING" id="349106.PsycPRwf_1759"/>
<dbReference type="KEGG" id="prw:PsycPRwf_1759"/>
<dbReference type="eggNOG" id="COG1160">
    <property type="taxonomic scope" value="Bacteria"/>
</dbReference>
<dbReference type="HOGENOM" id="CLU_016077_6_2_6"/>
<dbReference type="GO" id="GO:0005525">
    <property type="term" value="F:GTP binding"/>
    <property type="evidence" value="ECO:0007669"/>
    <property type="project" value="UniProtKB-UniRule"/>
</dbReference>
<dbReference type="GO" id="GO:0043022">
    <property type="term" value="F:ribosome binding"/>
    <property type="evidence" value="ECO:0007669"/>
    <property type="project" value="TreeGrafter"/>
</dbReference>
<dbReference type="GO" id="GO:0042254">
    <property type="term" value="P:ribosome biogenesis"/>
    <property type="evidence" value="ECO:0007669"/>
    <property type="project" value="UniProtKB-KW"/>
</dbReference>
<dbReference type="CDD" id="cd01894">
    <property type="entry name" value="EngA1"/>
    <property type="match status" value="1"/>
</dbReference>
<dbReference type="CDD" id="cd01895">
    <property type="entry name" value="EngA2"/>
    <property type="match status" value="1"/>
</dbReference>
<dbReference type="FunFam" id="3.30.300.20:FF:000004">
    <property type="entry name" value="GTPase Der"/>
    <property type="match status" value="1"/>
</dbReference>
<dbReference type="FunFam" id="3.40.50.300:FF:000040">
    <property type="entry name" value="GTPase Der"/>
    <property type="match status" value="1"/>
</dbReference>
<dbReference type="FunFam" id="3.40.50.300:FF:000057">
    <property type="entry name" value="GTPase Der"/>
    <property type="match status" value="1"/>
</dbReference>
<dbReference type="Gene3D" id="3.30.300.20">
    <property type="match status" value="1"/>
</dbReference>
<dbReference type="Gene3D" id="3.40.50.300">
    <property type="entry name" value="P-loop containing nucleotide triphosphate hydrolases"/>
    <property type="match status" value="2"/>
</dbReference>
<dbReference type="HAMAP" id="MF_00195">
    <property type="entry name" value="GTPase_Der"/>
    <property type="match status" value="1"/>
</dbReference>
<dbReference type="InterPro" id="IPR031166">
    <property type="entry name" value="G_ENGA"/>
</dbReference>
<dbReference type="InterPro" id="IPR006073">
    <property type="entry name" value="GTP-bd"/>
</dbReference>
<dbReference type="InterPro" id="IPR016484">
    <property type="entry name" value="GTPase_Der"/>
</dbReference>
<dbReference type="InterPro" id="IPR032859">
    <property type="entry name" value="KH_dom-like"/>
</dbReference>
<dbReference type="InterPro" id="IPR015946">
    <property type="entry name" value="KH_dom-like_a/b"/>
</dbReference>
<dbReference type="InterPro" id="IPR027417">
    <property type="entry name" value="P-loop_NTPase"/>
</dbReference>
<dbReference type="InterPro" id="IPR005225">
    <property type="entry name" value="Small_GTP-bd"/>
</dbReference>
<dbReference type="NCBIfam" id="TIGR03594">
    <property type="entry name" value="GTPase_EngA"/>
    <property type="match status" value="1"/>
</dbReference>
<dbReference type="NCBIfam" id="TIGR00231">
    <property type="entry name" value="small_GTP"/>
    <property type="match status" value="2"/>
</dbReference>
<dbReference type="PANTHER" id="PTHR43834">
    <property type="entry name" value="GTPASE DER"/>
    <property type="match status" value="1"/>
</dbReference>
<dbReference type="PANTHER" id="PTHR43834:SF6">
    <property type="entry name" value="GTPASE DER"/>
    <property type="match status" value="1"/>
</dbReference>
<dbReference type="Pfam" id="PF14714">
    <property type="entry name" value="KH_dom-like"/>
    <property type="match status" value="1"/>
</dbReference>
<dbReference type="Pfam" id="PF01926">
    <property type="entry name" value="MMR_HSR1"/>
    <property type="match status" value="2"/>
</dbReference>
<dbReference type="PIRSF" id="PIRSF006485">
    <property type="entry name" value="GTP-binding_EngA"/>
    <property type="match status" value="1"/>
</dbReference>
<dbReference type="PRINTS" id="PR00326">
    <property type="entry name" value="GTP1OBG"/>
</dbReference>
<dbReference type="SUPFAM" id="SSF52540">
    <property type="entry name" value="P-loop containing nucleoside triphosphate hydrolases"/>
    <property type="match status" value="2"/>
</dbReference>
<dbReference type="PROSITE" id="PS51712">
    <property type="entry name" value="G_ENGA"/>
    <property type="match status" value="2"/>
</dbReference>
<keyword id="KW-0342">GTP-binding</keyword>
<keyword id="KW-0547">Nucleotide-binding</keyword>
<keyword id="KW-0677">Repeat</keyword>
<keyword id="KW-0690">Ribosome biogenesis</keyword>
<accession>A5WGA8</accession>
<comment type="function">
    <text evidence="1">GTPase that plays an essential role in the late steps of ribosome biogenesis.</text>
</comment>
<comment type="subunit">
    <text evidence="1">Associates with the 50S ribosomal subunit.</text>
</comment>
<comment type="similarity">
    <text evidence="1">Belongs to the TRAFAC class TrmE-Era-EngA-EngB-Septin-like GTPase superfamily. EngA (Der) GTPase family.</text>
</comment>
<sequence length="473" mass="52163">MSMKPVVALIGRPNVGKSTIFNQMTKTRQALVADLSGLTRDRQYGDATYNNKSFVVIDTGGIGEADDGRGSIDDYMSAQSHTAIHEADILVFVVDARAGMIGADAEIGKMLHTLGKPVYLVANKIDGVHDAAPAEFYALGLGEPYPMTASHGRGIANLLDDLTADMPEDVEEEDQGGLKLAIIGRPNVGKSTLVNRMLGEERVVVYDMPGTTRDSIYIPFERNGKNYVLIDTAGVRRRGRIDEKVEKFSVIKALQAIKDANVVVAVIDAQEGIVDQDLHMLGYALDAGRAMVVAINKWDGLSEDKKEMIRIELDRRFNFIPYVKVHFISALHGTNVGNLYPSIHKAYASSMFKVSTNRLTQILEDAVAANPPPMSGGRRIKLRYAHLGGHNPPIIVIHGNQTGSLPKSYQRYLENEFRKVFNLEGTPLKVEFKLNTNPYAGKKTTSSKKLRPGVSEARQKRRNMKYKKGSHKK</sequence>
<name>DER_PSYWF</name>
<organism>
    <name type="scientific">Psychrobacter sp. (strain PRwf-1)</name>
    <dbReference type="NCBI Taxonomy" id="349106"/>
    <lineage>
        <taxon>Bacteria</taxon>
        <taxon>Pseudomonadati</taxon>
        <taxon>Pseudomonadota</taxon>
        <taxon>Gammaproteobacteria</taxon>
        <taxon>Moraxellales</taxon>
        <taxon>Moraxellaceae</taxon>
        <taxon>Psychrobacter</taxon>
    </lineage>
</organism>
<reference key="1">
    <citation type="submission" date="2007-05" db="EMBL/GenBank/DDBJ databases">
        <title>Complete sequence of chromosome of Psychrobacter sp. PRwf-1.</title>
        <authorList>
            <consortium name="US DOE Joint Genome Institute"/>
            <person name="Copeland A."/>
            <person name="Lucas S."/>
            <person name="Lapidus A."/>
            <person name="Barry K."/>
            <person name="Detter J.C."/>
            <person name="Glavina del Rio T."/>
            <person name="Hammon N."/>
            <person name="Israni S."/>
            <person name="Dalin E."/>
            <person name="Tice H."/>
            <person name="Pitluck S."/>
            <person name="Chain P."/>
            <person name="Malfatti S."/>
            <person name="Shin M."/>
            <person name="Vergez L."/>
            <person name="Schmutz J."/>
            <person name="Larimer F."/>
            <person name="Land M."/>
            <person name="Hauser L."/>
            <person name="Kyrpides N."/>
            <person name="Kim E."/>
            <person name="Tiedje J."/>
            <person name="Richardson P."/>
        </authorList>
    </citation>
    <scope>NUCLEOTIDE SEQUENCE [LARGE SCALE GENOMIC DNA]</scope>
    <source>
        <strain>PRwf-1</strain>
    </source>
</reference>
<evidence type="ECO:0000255" key="1">
    <source>
        <dbReference type="HAMAP-Rule" id="MF_00195"/>
    </source>
</evidence>
<evidence type="ECO:0000256" key="2">
    <source>
        <dbReference type="SAM" id="MobiDB-lite"/>
    </source>
</evidence>
<proteinExistence type="inferred from homology"/>